<proteinExistence type="inferred from homology"/>
<evidence type="ECO:0000255" key="1">
    <source>
        <dbReference type="HAMAP-Rule" id="MF_00165"/>
    </source>
</evidence>
<reference key="1">
    <citation type="journal article" date="2002" name="J. Mol. Microbiol. Biotechnol.">
        <title>The genome of Methanosarcina mazei: evidence for lateral gene transfer between Bacteria and Archaea.</title>
        <authorList>
            <person name="Deppenmeier U."/>
            <person name="Johann A."/>
            <person name="Hartsch T."/>
            <person name="Merkl R."/>
            <person name="Schmitz R.A."/>
            <person name="Martinez-Arias R."/>
            <person name="Henne A."/>
            <person name="Wiezer A."/>
            <person name="Baeumer S."/>
            <person name="Jacobi C."/>
            <person name="Brueggemann H."/>
            <person name="Lienard T."/>
            <person name="Christmann A."/>
            <person name="Boemecke M."/>
            <person name="Steckel S."/>
            <person name="Bhattacharyya A."/>
            <person name="Lykidis A."/>
            <person name="Overbeek R."/>
            <person name="Klenk H.-P."/>
            <person name="Gunsalus R.P."/>
            <person name="Fritz H.-J."/>
            <person name="Gottschalk G."/>
        </authorList>
    </citation>
    <scope>NUCLEOTIDE SEQUENCE [LARGE SCALE GENOMIC DNA]</scope>
    <source>
        <strain>ATCC BAA-159 / DSM 3647 / Goe1 / Go1 / JCM 11833 / OCM 88</strain>
    </source>
</reference>
<feature type="chain" id="PRO_0000155388" description="Probable thymidylate kinase">
    <location>
        <begin position="1"/>
        <end position="206"/>
    </location>
</feature>
<feature type="binding site" evidence="1">
    <location>
        <begin position="10"/>
        <end position="17"/>
    </location>
    <ligand>
        <name>ATP</name>
        <dbReference type="ChEBI" id="CHEBI:30616"/>
    </ligand>
</feature>
<gene>
    <name evidence="1" type="primary">tmk</name>
    <name type="ordered locus">MM_1111</name>
</gene>
<comment type="catalytic activity">
    <reaction evidence="1">
        <text>dTMP + ATP = dTDP + ADP</text>
        <dbReference type="Rhea" id="RHEA:13517"/>
        <dbReference type="ChEBI" id="CHEBI:30616"/>
        <dbReference type="ChEBI" id="CHEBI:58369"/>
        <dbReference type="ChEBI" id="CHEBI:63528"/>
        <dbReference type="ChEBI" id="CHEBI:456216"/>
        <dbReference type="EC" id="2.7.4.9"/>
    </reaction>
</comment>
<comment type="similarity">
    <text evidence="1">Belongs to the thymidylate kinase family.</text>
</comment>
<dbReference type="EC" id="2.7.4.9" evidence="1"/>
<dbReference type="EMBL" id="AE008384">
    <property type="protein sequence ID" value="AAM30807.1"/>
    <property type="molecule type" value="Genomic_DNA"/>
</dbReference>
<dbReference type="RefSeq" id="WP_011033060.1">
    <property type="nucleotide sequence ID" value="NC_003901.1"/>
</dbReference>
<dbReference type="SMR" id="Q8PXV5"/>
<dbReference type="GeneID" id="66137461"/>
<dbReference type="KEGG" id="mma:MM_1111"/>
<dbReference type="PATRIC" id="fig|192952.21.peg.1300"/>
<dbReference type="eggNOG" id="arCOG01891">
    <property type="taxonomic scope" value="Archaea"/>
</dbReference>
<dbReference type="HOGENOM" id="CLU_049131_0_2_2"/>
<dbReference type="Proteomes" id="UP000000595">
    <property type="component" value="Chromosome"/>
</dbReference>
<dbReference type="GO" id="GO:0005737">
    <property type="term" value="C:cytoplasm"/>
    <property type="evidence" value="ECO:0007669"/>
    <property type="project" value="TreeGrafter"/>
</dbReference>
<dbReference type="GO" id="GO:0005524">
    <property type="term" value="F:ATP binding"/>
    <property type="evidence" value="ECO:0007669"/>
    <property type="project" value="UniProtKB-UniRule"/>
</dbReference>
<dbReference type="GO" id="GO:0004798">
    <property type="term" value="F:dTMP kinase activity"/>
    <property type="evidence" value="ECO:0007669"/>
    <property type="project" value="UniProtKB-UniRule"/>
</dbReference>
<dbReference type="GO" id="GO:0006233">
    <property type="term" value="P:dTDP biosynthetic process"/>
    <property type="evidence" value="ECO:0007669"/>
    <property type="project" value="InterPro"/>
</dbReference>
<dbReference type="GO" id="GO:0006235">
    <property type="term" value="P:dTTP biosynthetic process"/>
    <property type="evidence" value="ECO:0007669"/>
    <property type="project" value="UniProtKB-UniRule"/>
</dbReference>
<dbReference type="GO" id="GO:0006227">
    <property type="term" value="P:dUDP biosynthetic process"/>
    <property type="evidence" value="ECO:0007669"/>
    <property type="project" value="TreeGrafter"/>
</dbReference>
<dbReference type="CDD" id="cd01672">
    <property type="entry name" value="TMPK"/>
    <property type="match status" value="1"/>
</dbReference>
<dbReference type="FunFam" id="3.40.50.300:FF:000225">
    <property type="entry name" value="Thymidylate kinase"/>
    <property type="match status" value="1"/>
</dbReference>
<dbReference type="Gene3D" id="3.40.50.300">
    <property type="entry name" value="P-loop containing nucleotide triphosphate hydrolases"/>
    <property type="match status" value="1"/>
</dbReference>
<dbReference type="HAMAP" id="MF_00165">
    <property type="entry name" value="Thymidylate_kinase"/>
    <property type="match status" value="1"/>
</dbReference>
<dbReference type="InterPro" id="IPR027417">
    <property type="entry name" value="P-loop_NTPase"/>
</dbReference>
<dbReference type="InterPro" id="IPR039430">
    <property type="entry name" value="Thymidylate_kin-like_dom"/>
</dbReference>
<dbReference type="InterPro" id="IPR018094">
    <property type="entry name" value="Thymidylate_kinase"/>
</dbReference>
<dbReference type="NCBIfam" id="TIGR00041">
    <property type="entry name" value="DTMP_kinase"/>
    <property type="match status" value="1"/>
</dbReference>
<dbReference type="PANTHER" id="PTHR10344">
    <property type="entry name" value="THYMIDYLATE KINASE"/>
    <property type="match status" value="1"/>
</dbReference>
<dbReference type="PANTHER" id="PTHR10344:SF4">
    <property type="entry name" value="UMP-CMP KINASE 2, MITOCHONDRIAL"/>
    <property type="match status" value="1"/>
</dbReference>
<dbReference type="Pfam" id="PF02223">
    <property type="entry name" value="Thymidylate_kin"/>
    <property type="match status" value="1"/>
</dbReference>
<dbReference type="SUPFAM" id="SSF52540">
    <property type="entry name" value="P-loop containing nucleoside triphosphate hydrolases"/>
    <property type="match status" value="1"/>
</dbReference>
<sequence length="206" mass="23321">MRGKLITLEGIDGSGKSTVAKKIQENPEIQVFDPVFTREPTRGTLTGTAVENAIQSETDQLAELFLFTADHAEHLAKLVKPALANGKNVISDRYSDSRYAYQGVTLKSRFENPLEWVRSLHSGWTVVPDLTFLFDIEPEIAVERCGKRGEQTKFEKIEFLQNVRENFLILAAEDPGRFVVIDASRPQEEVEKKVIKKVLEFIQRIS</sequence>
<keyword id="KW-0067">ATP-binding</keyword>
<keyword id="KW-0418">Kinase</keyword>
<keyword id="KW-0545">Nucleotide biosynthesis</keyword>
<keyword id="KW-0547">Nucleotide-binding</keyword>
<keyword id="KW-0808">Transferase</keyword>
<accession>Q8PXV5</accession>
<organism>
    <name type="scientific">Methanosarcina mazei (strain ATCC BAA-159 / DSM 3647 / Goe1 / Go1 / JCM 11833 / OCM 88)</name>
    <name type="common">Methanosarcina frisia</name>
    <dbReference type="NCBI Taxonomy" id="192952"/>
    <lineage>
        <taxon>Archaea</taxon>
        <taxon>Methanobacteriati</taxon>
        <taxon>Methanobacteriota</taxon>
        <taxon>Stenosarchaea group</taxon>
        <taxon>Methanomicrobia</taxon>
        <taxon>Methanosarcinales</taxon>
        <taxon>Methanosarcinaceae</taxon>
        <taxon>Methanosarcina</taxon>
    </lineage>
</organism>
<name>KTHY_METMA</name>
<protein>
    <recommendedName>
        <fullName evidence="1">Probable thymidylate kinase</fullName>
        <ecNumber evidence="1">2.7.4.9</ecNumber>
    </recommendedName>
    <alternativeName>
        <fullName evidence="1">dTMP kinase</fullName>
    </alternativeName>
</protein>